<dbReference type="EMBL" id="CP000680">
    <property type="protein sequence ID" value="ABP83998.1"/>
    <property type="molecule type" value="Genomic_DNA"/>
</dbReference>
<dbReference type="SMR" id="A4XRN2"/>
<dbReference type="STRING" id="399739.Pmen_1233"/>
<dbReference type="KEGG" id="pmy:Pmen_1233"/>
<dbReference type="eggNOG" id="COG0851">
    <property type="taxonomic scope" value="Bacteria"/>
</dbReference>
<dbReference type="HOGENOM" id="CLU_137929_2_1_6"/>
<dbReference type="OrthoDB" id="9802655at2"/>
<dbReference type="GO" id="GO:0051301">
    <property type="term" value="P:cell division"/>
    <property type="evidence" value="ECO:0007669"/>
    <property type="project" value="UniProtKB-KW"/>
</dbReference>
<dbReference type="GO" id="GO:0032955">
    <property type="term" value="P:regulation of division septum assembly"/>
    <property type="evidence" value="ECO:0007669"/>
    <property type="project" value="InterPro"/>
</dbReference>
<dbReference type="FunFam" id="3.30.1070.10:FF:000001">
    <property type="entry name" value="Cell division topological specificity factor"/>
    <property type="match status" value="1"/>
</dbReference>
<dbReference type="Gene3D" id="3.30.1070.10">
    <property type="entry name" value="Cell division topological specificity factor MinE"/>
    <property type="match status" value="1"/>
</dbReference>
<dbReference type="HAMAP" id="MF_00262">
    <property type="entry name" value="MinE"/>
    <property type="match status" value="1"/>
</dbReference>
<dbReference type="InterPro" id="IPR005527">
    <property type="entry name" value="MinE"/>
</dbReference>
<dbReference type="InterPro" id="IPR036707">
    <property type="entry name" value="MinE_sf"/>
</dbReference>
<dbReference type="NCBIfam" id="TIGR01215">
    <property type="entry name" value="minE"/>
    <property type="match status" value="1"/>
</dbReference>
<dbReference type="NCBIfam" id="NF001422">
    <property type="entry name" value="PRK00296.1"/>
    <property type="match status" value="1"/>
</dbReference>
<dbReference type="NCBIfam" id="NF010595">
    <property type="entry name" value="PRK13989.1"/>
    <property type="match status" value="1"/>
</dbReference>
<dbReference type="Pfam" id="PF03776">
    <property type="entry name" value="MinE"/>
    <property type="match status" value="1"/>
</dbReference>
<dbReference type="SUPFAM" id="SSF55229">
    <property type="entry name" value="Cell division protein MinE topological specificity domain"/>
    <property type="match status" value="1"/>
</dbReference>
<reference key="1">
    <citation type="submission" date="2007-04" db="EMBL/GenBank/DDBJ databases">
        <title>Complete sequence of Pseudomonas mendocina ymp.</title>
        <authorList>
            <consortium name="US DOE Joint Genome Institute"/>
            <person name="Copeland A."/>
            <person name="Lucas S."/>
            <person name="Lapidus A."/>
            <person name="Barry K."/>
            <person name="Glavina del Rio T."/>
            <person name="Dalin E."/>
            <person name="Tice H."/>
            <person name="Pitluck S."/>
            <person name="Kiss H."/>
            <person name="Brettin T."/>
            <person name="Detter J.C."/>
            <person name="Bruce D."/>
            <person name="Han C."/>
            <person name="Schmutz J."/>
            <person name="Larimer F."/>
            <person name="Land M."/>
            <person name="Hauser L."/>
            <person name="Kyrpides N."/>
            <person name="Mikhailova N."/>
            <person name="Hersman L."/>
            <person name="Dubois J."/>
            <person name="Maurice P."/>
            <person name="Richardson P."/>
        </authorList>
    </citation>
    <scope>NUCLEOTIDE SEQUENCE [LARGE SCALE GENOMIC DNA]</scope>
    <source>
        <strain>ymp</strain>
    </source>
</reference>
<feature type="chain" id="PRO_1000047791" description="Cell division topological specificity factor">
    <location>
        <begin position="1"/>
        <end position="84"/>
    </location>
</feature>
<name>MINE_ECTM1</name>
<evidence type="ECO:0000255" key="1">
    <source>
        <dbReference type="HAMAP-Rule" id="MF_00262"/>
    </source>
</evidence>
<sequence length="84" mass="9696">MNIFDFLRSRKKETTASIAKERLQIIVAHERGQRSQPDYLPALQQELVEVIRKYVNIESDQVQVALENQGSCSILELNITLPDR</sequence>
<accession>A4XRN2</accession>
<proteinExistence type="inferred from homology"/>
<protein>
    <recommendedName>
        <fullName evidence="1">Cell division topological specificity factor</fullName>
    </recommendedName>
</protein>
<keyword id="KW-0131">Cell cycle</keyword>
<keyword id="KW-0132">Cell division</keyword>
<organism>
    <name type="scientific">Ectopseudomonas mendocina (strain ymp)</name>
    <name type="common">Pseudomonas mendocina</name>
    <dbReference type="NCBI Taxonomy" id="399739"/>
    <lineage>
        <taxon>Bacteria</taxon>
        <taxon>Pseudomonadati</taxon>
        <taxon>Pseudomonadota</taxon>
        <taxon>Gammaproteobacteria</taxon>
        <taxon>Pseudomonadales</taxon>
        <taxon>Pseudomonadaceae</taxon>
        <taxon>Ectopseudomonas</taxon>
    </lineage>
</organism>
<comment type="function">
    <text evidence="1">Prevents the cell division inhibition by proteins MinC and MinD at internal division sites while permitting inhibition at polar sites. This ensures cell division at the proper site by restricting the formation of a division septum at the midpoint of the long axis of the cell.</text>
</comment>
<comment type="similarity">
    <text evidence="1">Belongs to the MinE family.</text>
</comment>
<gene>
    <name evidence="1" type="primary">minE</name>
    <name type="ordered locus">Pmen_1233</name>
</gene>